<name>CYB_CEPHR</name>
<feature type="chain" id="PRO_0000254670" description="Cytochrome b">
    <location>
        <begin position="1"/>
        <end position="379"/>
    </location>
</feature>
<feature type="transmembrane region" description="Helical" evidence="2">
    <location>
        <begin position="33"/>
        <end position="53"/>
    </location>
</feature>
<feature type="transmembrane region" description="Helical" evidence="2">
    <location>
        <begin position="77"/>
        <end position="98"/>
    </location>
</feature>
<feature type="transmembrane region" description="Helical" evidence="2">
    <location>
        <begin position="113"/>
        <end position="133"/>
    </location>
</feature>
<feature type="transmembrane region" description="Helical" evidence="2">
    <location>
        <begin position="178"/>
        <end position="198"/>
    </location>
</feature>
<feature type="transmembrane region" description="Helical" evidence="2">
    <location>
        <begin position="226"/>
        <end position="246"/>
    </location>
</feature>
<feature type="transmembrane region" description="Helical" evidence="2">
    <location>
        <begin position="288"/>
        <end position="308"/>
    </location>
</feature>
<feature type="transmembrane region" description="Helical" evidence="2">
    <location>
        <begin position="320"/>
        <end position="340"/>
    </location>
</feature>
<feature type="transmembrane region" description="Helical" evidence="2">
    <location>
        <begin position="347"/>
        <end position="367"/>
    </location>
</feature>
<feature type="binding site" description="axial binding residue" evidence="2">
    <location>
        <position position="83"/>
    </location>
    <ligand>
        <name>heme b</name>
        <dbReference type="ChEBI" id="CHEBI:60344"/>
        <label>b562</label>
    </ligand>
    <ligandPart>
        <name>Fe</name>
        <dbReference type="ChEBI" id="CHEBI:18248"/>
    </ligandPart>
</feature>
<feature type="binding site" description="axial binding residue" evidence="2">
    <location>
        <position position="97"/>
    </location>
    <ligand>
        <name>heme b</name>
        <dbReference type="ChEBI" id="CHEBI:60344"/>
        <label>b566</label>
    </ligand>
    <ligandPart>
        <name>Fe</name>
        <dbReference type="ChEBI" id="CHEBI:18248"/>
    </ligandPart>
</feature>
<feature type="binding site" description="axial binding residue" evidence="2">
    <location>
        <position position="182"/>
    </location>
    <ligand>
        <name>heme b</name>
        <dbReference type="ChEBI" id="CHEBI:60344"/>
        <label>b562</label>
    </ligand>
    <ligandPart>
        <name>Fe</name>
        <dbReference type="ChEBI" id="CHEBI:18248"/>
    </ligandPart>
</feature>
<feature type="binding site" description="axial binding residue" evidence="2">
    <location>
        <position position="196"/>
    </location>
    <ligand>
        <name>heme b</name>
        <dbReference type="ChEBI" id="CHEBI:60344"/>
        <label>b566</label>
    </ligand>
    <ligandPart>
        <name>Fe</name>
        <dbReference type="ChEBI" id="CHEBI:18248"/>
    </ligandPart>
</feature>
<feature type="binding site" evidence="2">
    <location>
        <position position="201"/>
    </location>
    <ligand>
        <name>a ubiquinone</name>
        <dbReference type="ChEBI" id="CHEBI:16389"/>
    </ligand>
</feature>
<geneLocation type="mitochondrion"/>
<reference key="1">
    <citation type="journal article" date="2001" name="Mol. Phylogenet. Evol.">
        <title>Retrieval of four adaptive lineages in duiker antelope: evidence from mitochondrial DNA sequences and fluorescence in situ hybridization.</title>
        <authorList>
            <person name="van Vuuren B.J."/>
            <person name="Robinson T.J."/>
        </authorList>
    </citation>
    <scope>NUCLEOTIDE SEQUENCE [GENOMIC DNA]</scope>
</reference>
<organism>
    <name type="scientific">Cephalophorus harveyi</name>
    <name type="common">Harvey's red duiker</name>
    <name type="synonym">Cephalophus natalensis harveyi</name>
    <dbReference type="NCBI Taxonomy" id="129224"/>
    <lineage>
        <taxon>Eukaryota</taxon>
        <taxon>Metazoa</taxon>
        <taxon>Chordata</taxon>
        <taxon>Craniata</taxon>
        <taxon>Vertebrata</taxon>
        <taxon>Euteleostomi</taxon>
        <taxon>Mammalia</taxon>
        <taxon>Eutheria</taxon>
        <taxon>Laurasiatheria</taxon>
        <taxon>Artiodactyla</taxon>
        <taxon>Ruminantia</taxon>
        <taxon>Pecora</taxon>
        <taxon>Bovidae</taxon>
        <taxon>Cephalophinae</taxon>
        <taxon>Cephalophus</taxon>
    </lineage>
</organism>
<dbReference type="EMBL" id="AF153887">
    <property type="protein sequence ID" value="AAK26675.1"/>
    <property type="molecule type" value="Genomic_DNA"/>
</dbReference>
<dbReference type="SMR" id="Q7IYN8"/>
<dbReference type="GO" id="GO:0005743">
    <property type="term" value="C:mitochondrial inner membrane"/>
    <property type="evidence" value="ECO:0007669"/>
    <property type="project" value="UniProtKB-SubCell"/>
</dbReference>
<dbReference type="GO" id="GO:0045275">
    <property type="term" value="C:respiratory chain complex III"/>
    <property type="evidence" value="ECO:0007669"/>
    <property type="project" value="InterPro"/>
</dbReference>
<dbReference type="GO" id="GO:0046872">
    <property type="term" value="F:metal ion binding"/>
    <property type="evidence" value="ECO:0007669"/>
    <property type="project" value="UniProtKB-KW"/>
</dbReference>
<dbReference type="GO" id="GO:0008121">
    <property type="term" value="F:ubiquinol-cytochrome-c reductase activity"/>
    <property type="evidence" value="ECO:0007669"/>
    <property type="project" value="InterPro"/>
</dbReference>
<dbReference type="GO" id="GO:0006122">
    <property type="term" value="P:mitochondrial electron transport, ubiquinol to cytochrome c"/>
    <property type="evidence" value="ECO:0007669"/>
    <property type="project" value="TreeGrafter"/>
</dbReference>
<dbReference type="CDD" id="cd00290">
    <property type="entry name" value="cytochrome_b_C"/>
    <property type="match status" value="1"/>
</dbReference>
<dbReference type="CDD" id="cd00284">
    <property type="entry name" value="Cytochrome_b_N"/>
    <property type="match status" value="1"/>
</dbReference>
<dbReference type="FunFam" id="1.20.810.10:FF:000002">
    <property type="entry name" value="Cytochrome b"/>
    <property type="match status" value="1"/>
</dbReference>
<dbReference type="Gene3D" id="1.20.810.10">
    <property type="entry name" value="Cytochrome Bc1 Complex, Chain C"/>
    <property type="match status" value="1"/>
</dbReference>
<dbReference type="InterPro" id="IPR005798">
    <property type="entry name" value="Cyt_b/b6_C"/>
</dbReference>
<dbReference type="InterPro" id="IPR036150">
    <property type="entry name" value="Cyt_b/b6_C_sf"/>
</dbReference>
<dbReference type="InterPro" id="IPR005797">
    <property type="entry name" value="Cyt_b/b6_N"/>
</dbReference>
<dbReference type="InterPro" id="IPR027387">
    <property type="entry name" value="Cytb/b6-like_sf"/>
</dbReference>
<dbReference type="InterPro" id="IPR030689">
    <property type="entry name" value="Cytochrome_b"/>
</dbReference>
<dbReference type="InterPro" id="IPR048260">
    <property type="entry name" value="Cytochrome_b_C_euk/bac"/>
</dbReference>
<dbReference type="InterPro" id="IPR048259">
    <property type="entry name" value="Cytochrome_b_N_euk/bac"/>
</dbReference>
<dbReference type="InterPro" id="IPR016174">
    <property type="entry name" value="Di-haem_cyt_TM"/>
</dbReference>
<dbReference type="PANTHER" id="PTHR19271">
    <property type="entry name" value="CYTOCHROME B"/>
    <property type="match status" value="1"/>
</dbReference>
<dbReference type="PANTHER" id="PTHR19271:SF16">
    <property type="entry name" value="CYTOCHROME B"/>
    <property type="match status" value="1"/>
</dbReference>
<dbReference type="Pfam" id="PF00032">
    <property type="entry name" value="Cytochrom_B_C"/>
    <property type="match status" value="1"/>
</dbReference>
<dbReference type="Pfam" id="PF00033">
    <property type="entry name" value="Cytochrome_B"/>
    <property type="match status" value="1"/>
</dbReference>
<dbReference type="PIRSF" id="PIRSF038885">
    <property type="entry name" value="COB"/>
    <property type="match status" value="1"/>
</dbReference>
<dbReference type="SUPFAM" id="SSF81648">
    <property type="entry name" value="a domain/subunit of cytochrome bc1 complex (Ubiquinol-cytochrome c reductase)"/>
    <property type="match status" value="1"/>
</dbReference>
<dbReference type="SUPFAM" id="SSF81342">
    <property type="entry name" value="Transmembrane di-heme cytochromes"/>
    <property type="match status" value="1"/>
</dbReference>
<dbReference type="PROSITE" id="PS51003">
    <property type="entry name" value="CYTB_CTER"/>
    <property type="match status" value="1"/>
</dbReference>
<dbReference type="PROSITE" id="PS51002">
    <property type="entry name" value="CYTB_NTER"/>
    <property type="match status" value="1"/>
</dbReference>
<evidence type="ECO:0000250" key="1"/>
<evidence type="ECO:0000250" key="2">
    <source>
        <dbReference type="UniProtKB" id="P00157"/>
    </source>
</evidence>
<evidence type="ECO:0000255" key="3">
    <source>
        <dbReference type="PROSITE-ProRule" id="PRU00967"/>
    </source>
</evidence>
<evidence type="ECO:0000255" key="4">
    <source>
        <dbReference type="PROSITE-ProRule" id="PRU00968"/>
    </source>
</evidence>
<keyword id="KW-0249">Electron transport</keyword>
<keyword id="KW-0349">Heme</keyword>
<keyword id="KW-0408">Iron</keyword>
<keyword id="KW-0472">Membrane</keyword>
<keyword id="KW-0479">Metal-binding</keyword>
<keyword id="KW-0496">Mitochondrion</keyword>
<keyword id="KW-0999">Mitochondrion inner membrane</keyword>
<keyword id="KW-0679">Respiratory chain</keyword>
<keyword id="KW-0812">Transmembrane</keyword>
<keyword id="KW-1133">Transmembrane helix</keyword>
<keyword id="KW-0813">Transport</keyword>
<keyword id="KW-0830">Ubiquinone</keyword>
<gene>
    <name type="primary">MT-CYB</name>
    <name type="synonym">COB</name>
    <name type="synonym">CYTB</name>
    <name type="synonym">MTCYB</name>
</gene>
<sequence length="379" mass="42763">MTNIRKTHPLLKIENNAFIDLPAPSNISSWWNFGSLLGICLILQILTGLFLAMHYTADTTTAFSSVTHICRDVNYGWIIRYMHANGASMFFICLFMHVGRGLYYGSYTYMETWNIGVILLFATMATAFMGYVLPWGQMSFWGATVITNLLSAIPYIGTNLVEWIWGGFSVDKATLTRFFAFHFIFPFIIAALAMVHLLFLHETGSNNPTGISSDTDKIPFHPYYTIKDILGALLLVLALMTLVLFSPDLLGDPDNYTPANPLNTPPHIKPEWYFLFAYAILRSIPNKLGGVLALVLSILILVLMPLLHTSKQRSMMFRPISQCLFWILVADLLTLTWIGGQPVEHPYIIIGQLASIMYFLLILVLMPMASTIENNLLKW</sequence>
<comment type="function">
    <text evidence="2">Component of the ubiquinol-cytochrome c reductase complex (complex III or cytochrome b-c1 complex) that is part of the mitochondrial respiratory chain. The b-c1 complex mediates electron transfer from ubiquinol to cytochrome c. Contributes to the generation of a proton gradient across the mitochondrial membrane that is then used for ATP synthesis.</text>
</comment>
<comment type="cofactor">
    <cofactor evidence="2">
        <name>heme b</name>
        <dbReference type="ChEBI" id="CHEBI:60344"/>
    </cofactor>
    <text evidence="2">Binds 2 heme b groups non-covalently.</text>
</comment>
<comment type="subunit">
    <text evidence="2">The cytochrome bc1 complex contains 11 subunits: 3 respiratory subunits (MT-CYB, CYC1 and UQCRFS1), 2 core proteins (UQCRC1 and UQCRC2) and 6 low-molecular weight proteins (UQCRH/QCR6, UQCRB/QCR7, UQCRQ/QCR8, UQCR10/QCR9, UQCR11/QCR10 and a cleavage product of UQCRFS1). This cytochrome bc1 complex then forms a dimer.</text>
</comment>
<comment type="subcellular location">
    <subcellularLocation>
        <location evidence="2">Mitochondrion inner membrane</location>
        <topology evidence="2">Multi-pass membrane protein</topology>
    </subcellularLocation>
</comment>
<comment type="miscellaneous">
    <text evidence="1">Heme 1 (or BL or b562) is low-potential and absorbs at about 562 nm, and heme 2 (or BH or b566) is high-potential and absorbs at about 566 nm.</text>
</comment>
<comment type="similarity">
    <text evidence="3 4">Belongs to the cytochrome b family.</text>
</comment>
<comment type="caution">
    <text evidence="2">The full-length protein contains only eight transmembrane helices, not nine as predicted by bioinformatics tools.</text>
</comment>
<accession>Q7IYN8</accession>
<proteinExistence type="inferred from homology"/>
<protein>
    <recommendedName>
        <fullName>Cytochrome b</fullName>
    </recommendedName>
    <alternativeName>
        <fullName>Complex III subunit 3</fullName>
    </alternativeName>
    <alternativeName>
        <fullName>Complex III subunit III</fullName>
    </alternativeName>
    <alternativeName>
        <fullName>Cytochrome b-c1 complex subunit 3</fullName>
    </alternativeName>
    <alternativeName>
        <fullName>Ubiquinol-cytochrome-c reductase complex cytochrome b subunit</fullName>
    </alternativeName>
</protein>